<comment type="function">
    <text evidence="1">NDH shuttles electrons from NAD(P)H:plastoquinone, via FMN and iron-sulfur (Fe-S) centers, to quinones in the photosynthetic chain and possibly in a chloroplast respiratory chain. The immediate electron acceptor for the enzyme in this species is believed to be plastoquinone. Couples the redox reaction to proton translocation, and thus conserves the redox energy in a proton gradient.</text>
</comment>
<comment type="catalytic activity">
    <reaction evidence="1">
        <text>a plastoquinone + NADH + (n+1) H(+)(in) = a plastoquinol + NAD(+) + n H(+)(out)</text>
        <dbReference type="Rhea" id="RHEA:42608"/>
        <dbReference type="Rhea" id="RHEA-COMP:9561"/>
        <dbReference type="Rhea" id="RHEA-COMP:9562"/>
        <dbReference type="ChEBI" id="CHEBI:15378"/>
        <dbReference type="ChEBI" id="CHEBI:17757"/>
        <dbReference type="ChEBI" id="CHEBI:57540"/>
        <dbReference type="ChEBI" id="CHEBI:57945"/>
        <dbReference type="ChEBI" id="CHEBI:62192"/>
    </reaction>
</comment>
<comment type="catalytic activity">
    <reaction evidence="1">
        <text>a plastoquinone + NADPH + (n+1) H(+)(in) = a plastoquinol + NADP(+) + n H(+)(out)</text>
        <dbReference type="Rhea" id="RHEA:42612"/>
        <dbReference type="Rhea" id="RHEA-COMP:9561"/>
        <dbReference type="Rhea" id="RHEA-COMP:9562"/>
        <dbReference type="ChEBI" id="CHEBI:15378"/>
        <dbReference type="ChEBI" id="CHEBI:17757"/>
        <dbReference type="ChEBI" id="CHEBI:57783"/>
        <dbReference type="ChEBI" id="CHEBI:58349"/>
        <dbReference type="ChEBI" id="CHEBI:62192"/>
    </reaction>
</comment>
<comment type="cofactor">
    <cofactor evidence="1">
        <name>[4Fe-4S] cluster</name>
        <dbReference type="ChEBI" id="CHEBI:49883"/>
    </cofactor>
    <text evidence="1">Binds 2 [4Fe-4S] clusters per subunit.</text>
</comment>
<comment type="subunit">
    <text evidence="1">NDH is composed of at least 16 different subunits, 5 of which are encoded in the nucleus.</text>
</comment>
<comment type="subcellular location">
    <subcellularLocation>
        <location evidence="1">Plastid</location>
        <location evidence="1">Chloroplast thylakoid membrane</location>
        <topology evidence="1">Peripheral membrane protein</topology>
    </subcellularLocation>
</comment>
<comment type="similarity">
    <text evidence="1">Belongs to the complex I 23 kDa subunit family.</text>
</comment>
<protein>
    <recommendedName>
        <fullName evidence="1">NAD(P)H-quinone oxidoreductase subunit I, chloroplastic</fullName>
        <ecNumber evidence="1">7.1.1.-</ecNumber>
    </recommendedName>
    <alternativeName>
        <fullName evidence="1">NAD(P)H dehydrogenase subunit I</fullName>
        <shortName evidence="1">NDH subunit I</shortName>
    </alternativeName>
    <alternativeName>
        <fullName evidence="1">NADH-plastoquinone oxidoreductase subunit I</fullName>
    </alternativeName>
</protein>
<accession>Q06R76</accession>
<dbReference type="EC" id="7.1.1.-" evidence="1"/>
<dbReference type="EMBL" id="DQ673255">
    <property type="protein sequence ID" value="ABG74683.1"/>
    <property type="molecule type" value="Genomic_DNA"/>
</dbReference>
<dbReference type="RefSeq" id="YP_778545.1">
    <property type="nucleotide sequence ID" value="NC_008407.1"/>
</dbReference>
<dbReference type="SMR" id="Q06R76"/>
<dbReference type="GeneID" id="4319836"/>
<dbReference type="GO" id="GO:0009535">
    <property type="term" value="C:chloroplast thylakoid membrane"/>
    <property type="evidence" value="ECO:0007669"/>
    <property type="project" value="UniProtKB-SubCell"/>
</dbReference>
<dbReference type="GO" id="GO:0051539">
    <property type="term" value="F:4 iron, 4 sulfur cluster binding"/>
    <property type="evidence" value="ECO:0007669"/>
    <property type="project" value="UniProtKB-KW"/>
</dbReference>
<dbReference type="GO" id="GO:0005506">
    <property type="term" value="F:iron ion binding"/>
    <property type="evidence" value="ECO:0007669"/>
    <property type="project" value="UniProtKB-UniRule"/>
</dbReference>
<dbReference type="GO" id="GO:0008137">
    <property type="term" value="F:NADH dehydrogenase (ubiquinone) activity"/>
    <property type="evidence" value="ECO:0007669"/>
    <property type="project" value="InterPro"/>
</dbReference>
<dbReference type="GO" id="GO:0048038">
    <property type="term" value="F:quinone binding"/>
    <property type="evidence" value="ECO:0007669"/>
    <property type="project" value="UniProtKB-KW"/>
</dbReference>
<dbReference type="GO" id="GO:0019684">
    <property type="term" value="P:photosynthesis, light reaction"/>
    <property type="evidence" value="ECO:0007669"/>
    <property type="project" value="UniProtKB-UniRule"/>
</dbReference>
<dbReference type="FunFam" id="3.30.70.3270:FF:000006">
    <property type="entry name" value="NAD(P)H-quinone oxidoreductase subunit I, chloroplastic"/>
    <property type="match status" value="1"/>
</dbReference>
<dbReference type="Gene3D" id="3.30.70.3270">
    <property type="match status" value="1"/>
</dbReference>
<dbReference type="HAMAP" id="MF_01351">
    <property type="entry name" value="NDH1_NuoI"/>
    <property type="match status" value="1"/>
</dbReference>
<dbReference type="InterPro" id="IPR017896">
    <property type="entry name" value="4Fe4S_Fe-S-bd"/>
</dbReference>
<dbReference type="InterPro" id="IPR017900">
    <property type="entry name" value="4Fe4S_Fe_S_CS"/>
</dbReference>
<dbReference type="InterPro" id="IPR010226">
    <property type="entry name" value="NADH_quinone_OxRdtase_chainI"/>
</dbReference>
<dbReference type="InterPro" id="IPR004497">
    <property type="entry name" value="NDHI"/>
</dbReference>
<dbReference type="NCBIfam" id="TIGR00403">
    <property type="entry name" value="ndhI"/>
    <property type="match status" value="1"/>
</dbReference>
<dbReference type="NCBIfam" id="TIGR01971">
    <property type="entry name" value="NuoI"/>
    <property type="match status" value="1"/>
</dbReference>
<dbReference type="NCBIfam" id="NF004537">
    <property type="entry name" value="PRK05888.1-3"/>
    <property type="match status" value="1"/>
</dbReference>
<dbReference type="PANTHER" id="PTHR47275">
    <property type="entry name" value="NAD(P)H-QUINONE OXIDOREDUCTASE SUBUNIT I, CHLOROPLASTIC"/>
    <property type="match status" value="1"/>
</dbReference>
<dbReference type="PANTHER" id="PTHR47275:SF1">
    <property type="entry name" value="NAD(P)H-QUINONE OXIDOREDUCTASE SUBUNIT I, CHLOROPLASTIC"/>
    <property type="match status" value="1"/>
</dbReference>
<dbReference type="Pfam" id="PF00037">
    <property type="entry name" value="Fer4"/>
    <property type="match status" value="2"/>
</dbReference>
<dbReference type="SUPFAM" id="SSF54862">
    <property type="entry name" value="4Fe-4S ferredoxins"/>
    <property type="match status" value="1"/>
</dbReference>
<dbReference type="PROSITE" id="PS00198">
    <property type="entry name" value="4FE4S_FER_1"/>
    <property type="match status" value="2"/>
</dbReference>
<dbReference type="PROSITE" id="PS51379">
    <property type="entry name" value="4FE4S_FER_2"/>
    <property type="match status" value="2"/>
</dbReference>
<reference key="1">
    <citation type="journal article" date="2007" name="Mol. Biol. Evol.">
        <title>Gene relocations within chloroplast genomes of Jasminum and Menodora (Oleaceae) are due to multiple, overlapping inversions.</title>
        <authorList>
            <person name="Lee H.-L."/>
            <person name="Jansen R.K."/>
            <person name="Chumley T.W."/>
            <person name="Kim K.-J."/>
        </authorList>
    </citation>
    <scope>NUCLEOTIDE SEQUENCE [LARGE SCALE GENOMIC DNA]</scope>
</reference>
<proteinExistence type="inferred from homology"/>
<keyword id="KW-0004">4Fe-4S</keyword>
<keyword id="KW-0150">Chloroplast</keyword>
<keyword id="KW-0408">Iron</keyword>
<keyword id="KW-0411">Iron-sulfur</keyword>
<keyword id="KW-0472">Membrane</keyword>
<keyword id="KW-0479">Metal-binding</keyword>
<keyword id="KW-0520">NAD</keyword>
<keyword id="KW-0521">NADP</keyword>
<keyword id="KW-0934">Plastid</keyword>
<keyword id="KW-0618">Plastoquinone</keyword>
<keyword id="KW-0874">Quinone</keyword>
<keyword id="KW-0677">Repeat</keyword>
<keyword id="KW-0793">Thylakoid</keyword>
<keyword id="KW-1278">Translocase</keyword>
<evidence type="ECO:0000255" key="1">
    <source>
        <dbReference type="HAMAP-Rule" id="MF_01351"/>
    </source>
</evidence>
<name>NDHI_JASNU</name>
<feature type="chain" id="PRO_0000275475" description="NAD(P)H-quinone oxidoreductase subunit I, chloroplastic">
    <location>
        <begin position="1"/>
        <end position="167"/>
    </location>
</feature>
<feature type="domain" description="4Fe-4S ferredoxin-type 1" evidence="1">
    <location>
        <begin position="55"/>
        <end position="84"/>
    </location>
</feature>
<feature type="domain" description="4Fe-4S ferredoxin-type 2" evidence="1">
    <location>
        <begin position="95"/>
        <end position="124"/>
    </location>
</feature>
<feature type="binding site" evidence="1">
    <location>
        <position position="64"/>
    </location>
    <ligand>
        <name>[4Fe-4S] cluster</name>
        <dbReference type="ChEBI" id="CHEBI:49883"/>
        <label>1</label>
    </ligand>
</feature>
<feature type="binding site" evidence="1">
    <location>
        <position position="67"/>
    </location>
    <ligand>
        <name>[4Fe-4S] cluster</name>
        <dbReference type="ChEBI" id="CHEBI:49883"/>
        <label>1</label>
    </ligand>
</feature>
<feature type="binding site" evidence="1">
    <location>
        <position position="70"/>
    </location>
    <ligand>
        <name>[4Fe-4S] cluster</name>
        <dbReference type="ChEBI" id="CHEBI:49883"/>
        <label>1</label>
    </ligand>
</feature>
<feature type="binding site" evidence="1">
    <location>
        <position position="74"/>
    </location>
    <ligand>
        <name>[4Fe-4S] cluster</name>
        <dbReference type="ChEBI" id="CHEBI:49883"/>
        <label>2</label>
    </ligand>
</feature>
<feature type="binding site" evidence="1">
    <location>
        <position position="104"/>
    </location>
    <ligand>
        <name>[4Fe-4S] cluster</name>
        <dbReference type="ChEBI" id="CHEBI:49883"/>
        <label>2</label>
    </ligand>
</feature>
<feature type="binding site" evidence="1">
    <location>
        <position position="107"/>
    </location>
    <ligand>
        <name>[4Fe-4S] cluster</name>
        <dbReference type="ChEBI" id="CHEBI:49883"/>
        <label>2</label>
    </ligand>
</feature>
<feature type="binding site" evidence="1">
    <location>
        <position position="110"/>
    </location>
    <ligand>
        <name>[4Fe-4S] cluster</name>
        <dbReference type="ChEBI" id="CHEBI:49883"/>
        <label>2</label>
    </ligand>
</feature>
<feature type="binding site" evidence="1">
    <location>
        <position position="114"/>
    </location>
    <ligand>
        <name>[4Fe-4S] cluster</name>
        <dbReference type="ChEBI" id="CHEBI:49883"/>
        <label>1</label>
    </ligand>
</feature>
<sequence>MFPMVTEFMNYGQQTIRAARYIGQGFMITLSHANRLPVTIQYPYEKLITSERFRGRIHFEFDKCIACEVCVRVCPIDLPVVDWKLETDIRKKRLLNYSIDFGICIFCGNCVEYCPTNCLSMTEEYELSTYNRHELNYNQIALGRLPVSIIDDYTIRTISSSPQIKNG</sequence>
<organism>
    <name type="scientific">Jasminum nudiflorum</name>
    <name type="common">Winter jasmine</name>
    <dbReference type="NCBI Taxonomy" id="126431"/>
    <lineage>
        <taxon>Eukaryota</taxon>
        <taxon>Viridiplantae</taxon>
        <taxon>Streptophyta</taxon>
        <taxon>Embryophyta</taxon>
        <taxon>Tracheophyta</taxon>
        <taxon>Spermatophyta</taxon>
        <taxon>Magnoliopsida</taxon>
        <taxon>eudicotyledons</taxon>
        <taxon>Gunneridae</taxon>
        <taxon>Pentapetalae</taxon>
        <taxon>asterids</taxon>
        <taxon>lamiids</taxon>
        <taxon>Lamiales</taxon>
        <taxon>Oleaceae</taxon>
        <taxon>Jasmineae</taxon>
        <taxon>Jasminum</taxon>
    </lineage>
</organism>
<gene>
    <name evidence="1" type="primary">ndhI</name>
    <name type="ORF">JNC1309</name>
</gene>
<geneLocation type="chloroplast"/>